<gene>
    <name evidence="1" type="primary">rplK</name>
    <name type="ordered locus">M6_Spy0401</name>
</gene>
<sequence length="141" mass="14801">MAKKVEKLVKLQIPAGKATPAPPVGPALGQAGINIMGFTKEFNARTADQAGMIIPVVISVYEDKSFDFITKTPPAAVLLKKAAGVEKGSGTPNTTKVATVTRAQVQEIAETKMPDLNAANIEAAMRMIEGTARSMGFTVTD</sequence>
<reference key="1">
    <citation type="journal article" date="2004" name="J. Infect. Dis.">
        <title>Progress toward characterization of the group A Streptococcus metagenome: complete genome sequence of a macrolide-resistant serotype M6 strain.</title>
        <authorList>
            <person name="Banks D.J."/>
            <person name="Porcella S.F."/>
            <person name="Barbian K.D."/>
            <person name="Beres S.B."/>
            <person name="Philips L.E."/>
            <person name="Voyich J.M."/>
            <person name="DeLeo F.R."/>
            <person name="Martin J.M."/>
            <person name="Somerville G.A."/>
            <person name="Musser J.M."/>
        </authorList>
    </citation>
    <scope>NUCLEOTIDE SEQUENCE [LARGE SCALE GENOMIC DNA]</scope>
    <source>
        <strain>ATCC BAA-946 / MGAS10394</strain>
    </source>
</reference>
<comment type="function">
    <text evidence="1">Forms part of the ribosomal stalk which helps the ribosome interact with GTP-bound translation factors.</text>
</comment>
<comment type="subunit">
    <text evidence="1">Part of the ribosomal stalk of the 50S ribosomal subunit. Interacts with L10 and the large rRNA to form the base of the stalk. L10 forms an elongated spine to which L12 dimers bind in a sequential fashion forming a multimeric L10(L12)X complex.</text>
</comment>
<comment type="PTM">
    <text evidence="1">One or more lysine residues are methylated.</text>
</comment>
<comment type="similarity">
    <text evidence="1">Belongs to the universal ribosomal protein uL11 family.</text>
</comment>
<comment type="sequence caution" evidence="2">
    <conflict type="erroneous initiation">
        <sequence resource="EMBL-CDS" id="AAT86536"/>
    </conflict>
</comment>
<organism>
    <name type="scientific">Streptococcus pyogenes serotype M6 (strain ATCC BAA-946 / MGAS10394)</name>
    <dbReference type="NCBI Taxonomy" id="286636"/>
    <lineage>
        <taxon>Bacteria</taxon>
        <taxon>Bacillati</taxon>
        <taxon>Bacillota</taxon>
        <taxon>Bacilli</taxon>
        <taxon>Lactobacillales</taxon>
        <taxon>Streptococcaceae</taxon>
        <taxon>Streptococcus</taxon>
    </lineage>
</organism>
<accession>Q5XDH7</accession>
<protein>
    <recommendedName>
        <fullName evidence="1">Large ribosomal subunit protein uL11</fullName>
    </recommendedName>
    <alternativeName>
        <fullName evidence="2">50S ribosomal protein L11</fullName>
    </alternativeName>
</protein>
<feature type="chain" id="PRO_0000104387" description="Large ribosomal subunit protein uL11">
    <location>
        <begin position="1"/>
        <end position="141"/>
    </location>
</feature>
<dbReference type="EMBL" id="CP000003">
    <property type="protein sequence ID" value="AAT86536.1"/>
    <property type="status" value="ALT_INIT"/>
    <property type="molecule type" value="Genomic_DNA"/>
</dbReference>
<dbReference type="RefSeq" id="WP_002990800.1">
    <property type="nucleotide sequence ID" value="NC_006086.1"/>
</dbReference>
<dbReference type="SMR" id="Q5XDH7"/>
<dbReference type="GeneID" id="69901302"/>
<dbReference type="KEGG" id="spa:M6_Spy0401"/>
<dbReference type="HOGENOM" id="CLU_074237_2_1_9"/>
<dbReference type="Proteomes" id="UP000001167">
    <property type="component" value="Chromosome"/>
</dbReference>
<dbReference type="GO" id="GO:0022625">
    <property type="term" value="C:cytosolic large ribosomal subunit"/>
    <property type="evidence" value="ECO:0007669"/>
    <property type="project" value="TreeGrafter"/>
</dbReference>
<dbReference type="GO" id="GO:0070180">
    <property type="term" value="F:large ribosomal subunit rRNA binding"/>
    <property type="evidence" value="ECO:0007669"/>
    <property type="project" value="UniProtKB-UniRule"/>
</dbReference>
<dbReference type="GO" id="GO:0003735">
    <property type="term" value="F:structural constituent of ribosome"/>
    <property type="evidence" value="ECO:0007669"/>
    <property type="project" value="InterPro"/>
</dbReference>
<dbReference type="GO" id="GO:0006412">
    <property type="term" value="P:translation"/>
    <property type="evidence" value="ECO:0007669"/>
    <property type="project" value="UniProtKB-UniRule"/>
</dbReference>
<dbReference type="CDD" id="cd00349">
    <property type="entry name" value="Ribosomal_L11"/>
    <property type="match status" value="1"/>
</dbReference>
<dbReference type="FunFam" id="1.10.10.250:FF:000001">
    <property type="entry name" value="50S ribosomal protein L11"/>
    <property type="match status" value="1"/>
</dbReference>
<dbReference type="FunFam" id="3.30.1550.10:FF:000001">
    <property type="entry name" value="50S ribosomal protein L11"/>
    <property type="match status" value="1"/>
</dbReference>
<dbReference type="Gene3D" id="1.10.10.250">
    <property type="entry name" value="Ribosomal protein L11, C-terminal domain"/>
    <property type="match status" value="1"/>
</dbReference>
<dbReference type="Gene3D" id="3.30.1550.10">
    <property type="entry name" value="Ribosomal protein L11/L12, N-terminal domain"/>
    <property type="match status" value="1"/>
</dbReference>
<dbReference type="HAMAP" id="MF_00736">
    <property type="entry name" value="Ribosomal_uL11"/>
    <property type="match status" value="1"/>
</dbReference>
<dbReference type="InterPro" id="IPR000911">
    <property type="entry name" value="Ribosomal_uL11"/>
</dbReference>
<dbReference type="InterPro" id="IPR006519">
    <property type="entry name" value="Ribosomal_uL11_bac-typ"/>
</dbReference>
<dbReference type="InterPro" id="IPR020783">
    <property type="entry name" value="Ribosomal_uL11_C"/>
</dbReference>
<dbReference type="InterPro" id="IPR036769">
    <property type="entry name" value="Ribosomal_uL11_C_sf"/>
</dbReference>
<dbReference type="InterPro" id="IPR020785">
    <property type="entry name" value="Ribosomal_uL11_CS"/>
</dbReference>
<dbReference type="InterPro" id="IPR020784">
    <property type="entry name" value="Ribosomal_uL11_N"/>
</dbReference>
<dbReference type="InterPro" id="IPR036796">
    <property type="entry name" value="Ribosomal_uL11_N_sf"/>
</dbReference>
<dbReference type="NCBIfam" id="TIGR01632">
    <property type="entry name" value="L11_bact"/>
    <property type="match status" value="1"/>
</dbReference>
<dbReference type="PANTHER" id="PTHR11661">
    <property type="entry name" value="60S RIBOSOMAL PROTEIN L12"/>
    <property type="match status" value="1"/>
</dbReference>
<dbReference type="PANTHER" id="PTHR11661:SF1">
    <property type="entry name" value="LARGE RIBOSOMAL SUBUNIT PROTEIN UL11M"/>
    <property type="match status" value="1"/>
</dbReference>
<dbReference type="Pfam" id="PF00298">
    <property type="entry name" value="Ribosomal_L11"/>
    <property type="match status" value="1"/>
</dbReference>
<dbReference type="Pfam" id="PF03946">
    <property type="entry name" value="Ribosomal_L11_N"/>
    <property type="match status" value="1"/>
</dbReference>
<dbReference type="SMART" id="SM00649">
    <property type="entry name" value="RL11"/>
    <property type="match status" value="1"/>
</dbReference>
<dbReference type="SUPFAM" id="SSF54747">
    <property type="entry name" value="Ribosomal L11/L12e N-terminal domain"/>
    <property type="match status" value="1"/>
</dbReference>
<dbReference type="SUPFAM" id="SSF46906">
    <property type="entry name" value="Ribosomal protein L11, C-terminal domain"/>
    <property type="match status" value="1"/>
</dbReference>
<dbReference type="PROSITE" id="PS00359">
    <property type="entry name" value="RIBOSOMAL_L11"/>
    <property type="match status" value="1"/>
</dbReference>
<name>RL11_STRP6</name>
<evidence type="ECO:0000255" key="1">
    <source>
        <dbReference type="HAMAP-Rule" id="MF_00736"/>
    </source>
</evidence>
<evidence type="ECO:0000305" key="2"/>
<proteinExistence type="inferred from homology"/>
<keyword id="KW-0488">Methylation</keyword>
<keyword id="KW-0687">Ribonucleoprotein</keyword>
<keyword id="KW-0689">Ribosomal protein</keyword>
<keyword id="KW-0694">RNA-binding</keyword>
<keyword id="KW-0699">rRNA-binding</keyword>